<dbReference type="EMBL" id="Z36943">
    <property type="protein sequence ID" value="CAA85405.1"/>
    <property type="molecule type" value="mRNA"/>
</dbReference>
<dbReference type="EMBL" id="Z50202">
    <property type="protein sequence ID" value="CAA90585.1"/>
    <property type="molecule type" value="Genomic_DNA"/>
</dbReference>
<dbReference type="PIR" id="S51359">
    <property type="entry name" value="S51359"/>
</dbReference>
<dbReference type="PDB" id="1IOA">
    <property type="method" value="X-ray"/>
    <property type="resolution" value="2.70 A"/>
    <property type="chains" value="A/B=22-261"/>
</dbReference>
<dbReference type="PDBsum" id="1IOA"/>
<dbReference type="SMR" id="Q42460"/>
<dbReference type="GlyCosmos" id="Q42460">
    <property type="glycosylation" value="3 sites, No reported glycans"/>
</dbReference>
<dbReference type="EvolutionaryTrace" id="Q42460"/>
<dbReference type="GO" id="GO:0030246">
    <property type="term" value="F:carbohydrate binding"/>
    <property type="evidence" value="ECO:0007669"/>
    <property type="project" value="UniProtKB-KW"/>
</dbReference>
<dbReference type="GO" id="GO:0045735">
    <property type="term" value="F:nutrient reservoir activity"/>
    <property type="evidence" value="ECO:0007669"/>
    <property type="project" value="UniProtKB-KW"/>
</dbReference>
<dbReference type="GO" id="GO:0090729">
    <property type="term" value="F:toxin activity"/>
    <property type="evidence" value="ECO:0007669"/>
    <property type="project" value="UniProtKB-KW"/>
</dbReference>
<dbReference type="GO" id="GO:0006952">
    <property type="term" value="P:defense response"/>
    <property type="evidence" value="ECO:0007669"/>
    <property type="project" value="UniProtKB-KW"/>
</dbReference>
<dbReference type="CDD" id="cd06899">
    <property type="entry name" value="lectin_legume_LecRK_Arcelin_ConA"/>
    <property type="match status" value="1"/>
</dbReference>
<dbReference type="Gene3D" id="2.60.120.200">
    <property type="match status" value="1"/>
</dbReference>
<dbReference type="InterPro" id="IPR013320">
    <property type="entry name" value="ConA-like_dom_sf"/>
</dbReference>
<dbReference type="InterPro" id="IPR016363">
    <property type="entry name" value="L-lectin"/>
</dbReference>
<dbReference type="InterPro" id="IPR000985">
    <property type="entry name" value="Lectin_LegA_CS"/>
</dbReference>
<dbReference type="InterPro" id="IPR001220">
    <property type="entry name" value="Legume_lectin_dom"/>
</dbReference>
<dbReference type="InterPro" id="IPR050258">
    <property type="entry name" value="Leguminous_Lectin"/>
</dbReference>
<dbReference type="PANTHER" id="PTHR32401">
    <property type="entry name" value="CONCANAVALIN A-LIKE LECTIN FAMILY PROTEIN"/>
    <property type="match status" value="1"/>
</dbReference>
<dbReference type="PANTHER" id="PTHR32401:SF45">
    <property type="entry name" value="LECTIN"/>
    <property type="match status" value="1"/>
</dbReference>
<dbReference type="Pfam" id="PF00139">
    <property type="entry name" value="Lectin_legB"/>
    <property type="match status" value="1"/>
</dbReference>
<dbReference type="PIRSF" id="PIRSF002690">
    <property type="entry name" value="L-type_lectin_plant"/>
    <property type="match status" value="1"/>
</dbReference>
<dbReference type="SUPFAM" id="SSF49899">
    <property type="entry name" value="Concanavalin A-like lectins/glucanases"/>
    <property type="match status" value="1"/>
</dbReference>
<dbReference type="PROSITE" id="PS00308">
    <property type="entry name" value="LECTIN_LEGUME_ALPHA"/>
    <property type="match status" value="1"/>
</dbReference>
<protein>
    <recommendedName>
        <fullName>Arcelin-5A</fullName>
    </recommendedName>
</protein>
<accession>Q42460</accession>
<keyword id="KW-0002">3D-structure</keyword>
<keyword id="KW-0903">Direct protein sequencing</keyword>
<keyword id="KW-1015">Disulfide bond</keyword>
<keyword id="KW-0325">Glycoprotein</keyword>
<keyword id="KW-0430">Lectin</keyword>
<keyword id="KW-0611">Plant defense</keyword>
<keyword id="KW-0708">Seed storage protein</keyword>
<keyword id="KW-0732">Signal</keyword>
<keyword id="KW-0758">Storage protein</keyword>
<keyword id="KW-0800">Toxin</keyword>
<evidence type="ECO:0000255" key="1"/>
<evidence type="ECO:0000305" key="2"/>
<evidence type="ECO:0007829" key="3">
    <source>
        <dbReference type="PDB" id="1IOA"/>
    </source>
</evidence>
<sequence length="261" mass="29121">MASSKLLSLALFLVLLTHANSATETSFNFPNFHTDDKLILQGNATISSKGQLQLTGVGSNELPRVDSLGRAFYSDPIQIKDSNNVASFNTNFTFIIRAKNQSISAYGLAFALVPVNSPPQKKQEFLGIFNTNNPEPNARTVAVVFNTFKNRIDFDKNFIKPYVNENCDFHKYNGEKTDVQITYDSSNNDLRVFLHFTVSQVKCSVSATVHLEKEVDEWVSVGFSATSGLTEDTTETHDVLSWSFSSKFRNKLSNILLNNIL</sequence>
<feature type="signal peptide">
    <location>
        <begin position="1"/>
        <end position="21"/>
    </location>
</feature>
<feature type="chain" id="PRO_0000017639" description="Arcelin-5A">
    <location>
        <begin position="22"/>
        <end position="254"/>
    </location>
</feature>
<feature type="propeptide" id="PRO_0000017640">
    <location>
        <begin position="255"/>
        <end position="261"/>
    </location>
</feature>
<feature type="glycosylation site" description="N-linked (GlcNAc...) asparagine">
    <location>
        <position position="43"/>
    </location>
</feature>
<feature type="glycosylation site" description="N-linked (GlcNAc...) asparagine" evidence="1">
    <location>
        <position position="91"/>
    </location>
</feature>
<feature type="glycosylation site" description="N-linked (GlcNAc...) asparagine" evidence="1">
    <location>
        <position position="100"/>
    </location>
</feature>
<feature type="disulfide bond">
    <location>
        <begin position="167"/>
        <end position="203"/>
    </location>
</feature>
<feature type="sequence variant" description="In C-terminal processing variant.">
    <location>
        <begin position="252"/>
        <end position="261"/>
    </location>
</feature>
<feature type="sequence variant" description="In C-terminal processing variant.">
    <location>
        <begin position="253"/>
        <end position="261"/>
    </location>
</feature>
<feature type="sequence variant" description="In C-terminal processing variant.">
    <location>
        <begin position="254"/>
        <end position="261"/>
    </location>
</feature>
<feature type="sequence variant" description="In C-terminal processing variant.">
    <location>
        <begin position="255"/>
        <end position="261"/>
    </location>
</feature>
<feature type="strand" evidence="3">
    <location>
        <begin position="26"/>
        <end position="31"/>
    </location>
</feature>
<feature type="strand" evidence="3">
    <location>
        <begin position="36"/>
        <end position="42"/>
    </location>
</feature>
<feature type="strand" evidence="3">
    <location>
        <begin position="61"/>
        <end position="63"/>
    </location>
</feature>
<feature type="strand" evidence="3">
    <location>
        <begin position="68"/>
        <end position="75"/>
    </location>
</feature>
<feature type="strand" evidence="3">
    <location>
        <begin position="87"/>
        <end position="95"/>
    </location>
</feature>
<feature type="strand" evidence="3">
    <location>
        <begin position="106"/>
        <end position="114"/>
    </location>
</feature>
<feature type="helix" evidence="3">
    <location>
        <begin position="123"/>
        <end position="125"/>
    </location>
</feature>
<feature type="turn" evidence="3">
    <location>
        <begin position="126"/>
        <end position="128"/>
    </location>
</feature>
<feature type="helix" evidence="3">
    <location>
        <begin position="136"/>
        <end position="138"/>
    </location>
</feature>
<feature type="strand" evidence="3">
    <location>
        <begin position="141"/>
        <end position="146"/>
    </location>
</feature>
<feature type="turn" evidence="3">
    <location>
        <begin position="147"/>
        <end position="150"/>
    </location>
</feature>
<feature type="strand" evidence="3">
    <location>
        <begin position="151"/>
        <end position="160"/>
    </location>
</feature>
<feature type="strand" evidence="3">
    <location>
        <begin position="162"/>
        <end position="166"/>
    </location>
</feature>
<feature type="helix" evidence="3">
    <location>
        <begin position="169"/>
        <end position="172"/>
    </location>
</feature>
<feature type="strand" evidence="3">
    <location>
        <begin position="177"/>
        <end position="184"/>
    </location>
</feature>
<feature type="turn" evidence="3">
    <location>
        <begin position="185"/>
        <end position="188"/>
    </location>
</feature>
<feature type="strand" evidence="3">
    <location>
        <begin position="189"/>
        <end position="196"/>
    </location>
</feature>
<feature type="turn" evidence="3">
    <location>
        <begin position="197"/>
        <end position="199"/>
    </location>
</feature>
<feature type="strand" evidence="3">
    <location>
        <begin position="202"/>
        <end position="208"/>
    </location>
</feature>
<feature type="helix" evidence="3">
    <location>
        <begin position="211"/>
        <end position="213"/>
    </location>
</feature>
<feature type="strand" evidence="3">
    <location>
        <begin position="217"/>
        <end position="227"/>
    </location>
</feature>
<feature type="turn" evidence="3">
    <location>
        <begin position="231"/>
        <end position="233"/>
    </location>
</feature>
<feature type="strand" evidence="3">
    <location>
        <begin position="238"/>
        <end position="247"/>
    </location>
</feature>
<reference key="1">
    <citation type="journal article" date="1994" name="Eur. J. Biochem.">
        <title>Isolation and characterisation of arcelin-5 proteins and cDNAs.</title>
        <authorList>
            <person name="Goossens A."/>
            <person name="Geremia R."/>
            <person name="Bauw G."/>
            <person name="van Montagu M."/>
            <person name="Angenon G."/>
        </authorList>
    </citation>
    <scope>NUCLEOTIDE SEQUENCE [GENOMIC DNA / MRNA]</scope>
    <scope>PARTIAL PROTEIN SEQUENCE</scope>
    <source>
        <strain>cv. G02771</strain>
        <tissue>Seed</tissue>
    </source>
</reference>
<reference key="2">
    <citation type="submission" date="1998-08" db="EMBL/GenBank/DDBJ databases">
        <authorList>
            <person name="Goossens A."/>
            <person name="Ardiles Diaz W."/>
            <person name="de Keyser A."/>
            <person name="van Montagu M."/>
            <person name="Angenon G."/>
        </authorList>
    </citation>
    <scope>NUCLEOTIDE SEQUENCE</scope>
    <scope>SEQUENCE REVISION TO 125</scope>
    <source>
        <strain>cv. G02771</strain>
        <tissue>Seed</tissue>
    </source>
</reference>
<reference key="3">
    <citation type="journal article" date="1999" name="FEBS Lett.">
        <title>Post-translational processing of two alpha-amylase inhibitors and an arcelin from the common bean, Phaseolus vulgaris.</title>
        <authorList>
            <person name="Young N.M."/>
            <person name="Thibault P."/>
            <person name="Watson D.C."/>
            <person name="Chrispeels M.J."/>
        </authorList>
    </citation>
    <scope>PROTEOLYTIC PROCESSING OF C-TERMINAL</scope>
</reference>
<reference key="4">
    <citation type="journal article" date="1996" name="J. Biol. Chem.">
        <title>Crystal structure of arcelin-5, a lectin-like defense protein from Phaseolus vulgaris.</title>
        <authorList>
            <person name="Hamelryck T.W."/>
            <person name="Poortmans F."/>
            <person name="Goossens A."/>
            <person name="Angenon G."/>
            <person name="van Montagu M."/>
            <person name="Wyns L."/>
            <person name="Loris R."/>
        </authorList>
    </citation>
    <scope>X-RAY CRYSTALLOGRAPHY (2.7 ANGSTROMS)</scope>
</reference>
<proteinExistence type="evidence at protein level"/>
<comment type="function">
    <text>Seed storage. This carbohydrate-binding lectin has toxic effects on bean bruchid pests.</text>
</comment>
<comment type="subunit">
    <text>Monomer.</text>
</comment>
<comment type="PTM">
    <text>The C-terminal segment appears to be highly susceptible to proteolysis.</text>
</comment>
<comment type="similarity">
    <text evidence="2">Belongs to the leguminous lectin family.</text>
</comment>
<gene>
    <name type="primary">ARC5A</name>
    <name type="synonym">ARC5-1</name>
    <name type="synonym">ARC5-I</name>
</gene>
<organism>
    <name type="scientific">Phaseolus vulgaris</name>
    <name type="common">Kidney bean</name>
    <name type="synonym">French bean</name>
    <dbReference type="NCBI Taxonomy" id="3885"/>
    <lineage>
        <taxon>Eukaryota</taxon>
        <taxon>Viridiplantae</taxon>
        <taxon>Streptophyta</taxon>
        <taxon>Embryophyta</taxon>
        <taxon>Tracheophyta</taxon>
        <taxon>Spermatophyta</taxon>
        <taxon>Magnoliopsida</taxon>
        <taxon>eudicotyledons</taxon>
        <taxon>Gunneridae</taxon>
        <taxon>Pentapetalae</taxon>
        <taxon>rosids</taxon>
        <taxon>fabids</taxon>
        <taxon>Fabales</taxon>
        <taxon>Fabaceae</taxon>
        <taxon>Papilionoideae</taxon>
        <taxon>50 kb inversion clade</taxon>
        <taxon>NPAAA clade</taxon>
        <taxon>indigoferoid/millettioid clade</taxon>
        <taxon>Phaseoleae</taxon>
        <taxon>Phaseolus</taxon>
    </lineage>
</organism>
<name>AR5A_PHAVU</name>